<gene>
    <name evidence="1" type="primary">glk</name>
    <name type="ordered locus">ECSE_2685</name>
</gene>
<organism>
    <name type="scientific">Escherichia coli (strain SE11)</name>
    <dbReference type="NCBI Taxonomy" id="409438"/>
    <lineage>
        <taxon>Bacteria</taxon>
        <taxon>Pseudomonadati</taxon>
        <taxon>Pseudomonadota</taxon>
        <taxon>Gammaproteobacteria</taxon>
        <taxon>Enterobacterales</taxon>
        <taxon>Enterobacteriaceae</taxon>
        <taxon>Escherichia</taxon>
    </lineage>
</organism>
<keyword id="KW-0067">ATP-binding</keyword>
<keyword id="KW-0963">Cytoplasm</keyword>
<keyword id="KW-0324">Glycolysis</keyword>
<keyword id="KW-0418">Kinase</keyword>
<keyword id="KW-0547">Nucleotide-binding</keyword>
<keyword id="KW-0808">Transferase</keyword>
<evidence type="ECO:0000255" key="1">
    <source>
        <dbReference type="HAMAP-Rule" id="MF_00524"/>
    </source>
</evidence>
<sequence length="321" mass="34723">MTKYALVGDVGGTNARLALCDIASGEISQAKTYSGLDYPSLEAVIRVYLEEHKVEVKDGCIAIACPITGDWVAMTNHTWAFSIAEMKKNLGFSHLEIINDFTAVSMAIPMLKKEHLIQFGGAEPVEGKPIAVYGAGTGLGVAHLVHVDKRWVSLPGEGGHVDFAPNSEEEAIILEILRAEIGHVSAERVLSGPGLVNLYRAIVKADNRLPENLKPKDITERALADSCTDCRRALSLFCVIMGRFGGNLALNLGTFGGVFIAGGIVPRFLEFFKASGFRAAFEDKGRFKEYVHDIPVYLIVHDNPGLLGSGAHLRQTLGHIL</sequence>
<dbReference type="EC" id="2.7.1.2" evidence="1"/>
<dbReference type="EMBL" id="AP009240">
    <property type="protein sequence ID" value="BAG78209.1"/>
    <property type="molecule type" value="Genomic_DNA"/>
</dbReference>
<dbReference type="RefSeq" id="WP_000170346.1">
    <property type="nucleotide sequence ID" value="NC_011415.1"/>
</dbReference>
<dbReference type="SMR" id="B6I6T9"/>
<dbReference type="GeneID" id="75202543"/>
<dbReference type="KEGG" id="ecy:ECSE_2685"/>
<dbReference type="HOGENOM" id="CLU_042582_1_0_6"/>
<dbReference type="Proteomes" id="UP000008199">
    <property type="component" value="Chromosome"/>
</dbReference>
<dbReference type="GO" id="GO:0005829">
    <property type="term" value="C:cytosol"/>
    <property type="evidence" value="ECO:0007669"/>
    <property type="project" value="TreeGrafter"/>
</dbReference>
<dbReference type="GO" id="GO:0005524">
    <property type="term" value="F:ATP binding"/>
    <property type="evidence" value="ECO:0007669"/>
    <property type="project" value="UniProtKB-UniRule"/>
</dbReference>
<dbReference type="GO" id="GO:0005536">
    <property type="term" value="F:D-glucose binding"/>
    <property type="evidence" value="ECO:0007669"/>
    <property type="project" value="InterPro"/>
</dbReference>
<dbReference type="GO" id="GO:0004340">
    <property type="term" value="F:glucokinase activity"/>
    <property type="evidence" value="ECO:0007669"/>
    <property type="project" value="UniProtKB-UniRule"/>
</dbReference>
<dbReference type="GO" id="GO:0006096">
    <property type="term" value="P:glycolytic process"/>
    <property type="evidence" value="ECO:0007669"/>
    <property type="project" value="UniProtKB-UniRule"/>
</dbReference>
<dbReference type="CDD" id="cd24008">
    <property type="entry name" value="ASKHA_NBD_GLK"/>
    <property type="match status" value="1"/>
</dbReference>
<dbReference type="FunFam" id="3.30.420.40:FF:000045">
    <property type="entry name" value="Glucokinase"/>
    <property type="match status" value="1"/>
</dbReference>
<dbReference type="FunFam" id="3.40.367.20:FF:000002">
    <property type="entry name" value="Glucokinase"/>
    <property type="match status" value="1"/>
</dbReference>
<dbReference type="Gene3D" id="3.30.420.40">
    <property type="match status" value="1"/>
</dbReference>
<dbReference type="Gene3D" id="3.40.367.20">
    <property type="match status" value="1"/>
</dbReference>
<dbReference type="HAMAP" id="MF_00524">
    <property type="entry name" value="Glucokinase"/>
    <property type="match status" value="1"/>
</dbReference>
<dbReference type="InterPro" id="IPR043129">
    <property type="entry name" value="ATPase_NBD"/>
</dbReference>
<dbReference type="InterPro" id="IPR050201">
    <property type="entry name" value="Bacterial_glucokinase"/>
</dbReference>
<dbReference type="InterPro" id="IPR003836">
    <property type="entry name" value="Glucokinase"/>
</dbReference>
<dbReference type="NCBIfam" id="TIGR00749">
    <property type="entry name" value="glk"/>
    <property type="match status" value="1"/>
</dbReference>
<dbReference type="NCBIfam" id="NF001414">
    <property type="entry name" value="PRK00292.1-1"/>
    <property type="match status" value="1"/>
</dbReference>
<dbReference type="NCBIfam" id="NF001416">
    <property type="entry name" value="PRK00292.1-3"/>
    <property type="match status" value="1"/>
</dbReference>
<dbReference type="PANTHER" id="PTHR47690">
    <property type="entry name" value="GLUCOKINASE"/>
    <property type="match status" value="1"/>
</dbReference>
<dbReference type="PANTHER" id="PTHR47690:SF1">
    <property type="entry name" value="GLUCOKINASE"/>
    <property type="match status" value="1"/>
</dbReference>
<dbReference type="Pfam" id="PF02685">
    <property type="entry name" value="Glucokinase"/>
    <property type="match status" value="1"/>
</dbReference>
<dbReference type="SUPFAM" id="SSF53067">
    <property type="entry name" value="Actin-like ATPase domain"/>
    <property type="match status" value="1"/>
</dbReference>
<reference key="1">
    <citation type="journal article" date="2008" name="DNA Res.">
        <title>Complete genome sequence and comparative analysis of the wild-type commensal Escherichia coli strain SE11 isolated from a healthy adult.</title>
        <authorList>
            <person name="Oshima K."/>
            <person name="Toh H."/>
            <person name="Ogura Y."/>
            <person name="Sasamoto H."/>
            <person name="Morita H."/>
            <person name="Park S.-H."/>
            <person name="Ooka T."/>
            <person name="Iyoda S."/>
            <person name="Taylor T.D."/>
            <person name="Hayashi T."/>
            <person name="Itoh K."/>
            <person name="Hattori M."/>
        </authorList>
    </citation>
    <scope>NUCLEOTIDE SEQUENCE [LARGE SCALE GENOMIC DNA]</scope>
    <source>
        <strain>SE11</strain>
    </source>
</reference>
<name>GLK_ECOSE</name>
<proteinExistence type="inferred from homology"/>
<protein>
    <recommendedName>
        <fullName evidence="1">Glucokinase</fullName>
        <ecNumber evidence="1">2.7.1.2</ecNumber>
    </recommendedName>
    <alternativeName>
        <fullName evidence="1">Glucose kinase</fullName>
    </alternativeName>
</protein>
<comment type="catalytic activity">
    <reaction evidence="1">
        <text>D-glucose + ATP = D-glucose 6-phosphate + ADP + H(+)</text>
        <dbReference type="Rhea" id="RHEA:17825"/>
        <dbReference type="ChEBI" id="CHEBI:4167"/>
        <dbReference type="ChEBI" id="CHEBI:15378"/>
        <dbReference type="ChEBI" id="CHEBI:30616"/>
        <dbReference type="ChEBI" id="CHEBI:61548"/>
        <dbReference type="ChEBI" id="CHEBI:456216"/>
        <dbReference type="EC" id="2.7.1.2"/>
    </reaction>
</comment>
<comment type="subcellular location">
    <subcellularLocation>
        <location evidence="1">Cytoplasm</location>
    </subcellularLocation>
</comment>
<comment type="similarity">
    <text evidence="1">Belongs to the bacterial glucokinase family.</text>
</comment>
<accession>B6I6T9</accession>
<feature type="chain" id="PRO_1000127705" description="Glucokinase">
    <location>
        <begin position="1"/>
        <end position="321"/>
    </location>
</feature>
<feature type="binding site" evidence="1">
    <location>
        <begin position="8"/>
        <end position="13"/>
    </location>
    <ligand>
        <name>ATP</name>
        <dbReference type="ChEBI" id="CHEBI:30616"/>
    </ligand>
</feature>